<keyword id="KW-0002">3D-structure</keyword>
<keyword id="KW-0025">Alternative splicing</keyword>
<keyword id="KW-0067">ATP-binding</keyword>
<keyword id="KW-0255">Endonuclease</keyword>
<keyword id="KW-0347">Helicase</keyword>
<keyword id="KW-0378">Hydrolase</keyword>
<keyword id="KW-0460">Magnesium</keyword>
<keyword id="KW-0479">Metal-binding</keyword>
<keyword id="KW-0540">Nuclease</keyword>
<keyword id="KW-0547">Nucleotide-binding</keyword>
<keyword id="KW-0539">Nucleus</keyword>
<keyword id="KW-0611">Plant defense</keyword>
<keyword id="KW-1185">Reference proteome</keyword>
<keyword id="KW-0677">Repeat</keyword>
<keyword id="KW-0694">RNA-binding</keyword>
<keyword id="KW-0943">RNA-mediated gene silencing</keyword>
<protein>
    <recommendedName>
        <fullName>Dicer-like protein 4</fullName>
        <ecNumber>3.1.26.-</ecNumber>
    </recommendedName>
</protein>
<evidence type="ECO:0000250" key="1"/>
<evidence type="ECO:0000255" key="2">
    <source>
        <dbReference type="PROSITE-ProRule" id="PRU00142"/>
    </source>
</evidence>
<evidence type="ECO:0000255" key="3">
    <source>
        <dbReference type="PROSITE-ProRule" id="PRU00177"/>
    </source>
</evidence>
<evidence type="ECO:0000255" key="4">
    <source>
        <dbReference type="PROSITE-ProRule" id="PRU00266"/>
    </source>
</evidence>
<evidence type="ECO:0000255" key="5">
    <source>
        <dbReference type="PROSITE-ProRule" id="PRU00541"/>
    </source>
</evidence>
<evidence type="ECO:0000255" key="6">
    <source>
        <dbReference type="PROSITE-ProRule" id="PRU00542"/>
    </source>
</evidence>
<evidence type="ECO:0000255" key="7">
    <source>
        <dbReference type="PROSITE-ProRule" id="PRU00657"/>
    </source>
</evidence>
<evidence type="ECO:0000256" key="8">
    <source>
        <dbReference type="SAM" id="MobiDB-lite"/>
    </source>
</evidence>
<evidence type="ECO:0000269" key="9">
    <source>
    </source>
</evidence>
<evidence type="ECO:0000269" key="10">
    <source>
    </source>
</evidence>
<evidence type="ECO:0000269" key="11">
    <source>
    </source>
</evidence>
<evidence type="ECO:0000269" key="12">
    <source>
    </source>
</evidence>
<evidence type="ECO:0000269" key="13">
    <source>
    </source>
</evidence>
<evidence type="ECO:0000269" key="14">
    <source>
    </source>
</evidence>
<evidence type="ECO:0000269" key="15">
    <source>
    </source>
</evidence>
<evidence type="ECO:0000269" key="16">
    <source>
    </source>
</evidence>
<evidence type="ECO:0000269" key="17">
    <source>
    </source>
</evidence>
<evidence type="ECO:0000269" key="18">
    <source>
    </source>
</evidence>
<evidence type="ECO:0000269" key="19">
    <source>
    </source>
</evidence>
<evidence type="ECO:0000269" key="20">
    <source>
    </source>
</evidence>
<evidence type="ECO:0000269" key="21">
    <source>
    </source>
</evidence>
<evidence type="ECO:0000305" key="22"/>
<evidence type="ECO:0007829" key="23">
    <source>
        <dbReference type="PDB" id="2KOU"/>
    </source>
</evidence>
<proteinExistence type="evidence at protein level"/>
<feature type="chain" id="PRO_0000180475" description="Dicer-like protein 4">
    <location>
        <begin position="1"/>
        <end position="1702"/>
    </location>
</feature>
<feature type="domain" description="Helicase ATP-binding" evidence="5">
    <location>
        <begin position="131"/>
        <end position="307"/>
    </location>
</feature>
<feature type="domain" description="Helicase C-terminal" evidence="6">
    <location>
        <begin position="475"/>
        <end position="629"/>
    </location>
</feature>
<feature type="domain" description="Dicer dsRNA-binding fold" evidence="7">
    <location>
        <begin position="656"/>
        <end position="748"/>
    </location>
</feature>
<feature type="domain" description="PAZ" evidence="2">
    <location>
        <begin position="932"/>
        <end position="1054"/>
    </location>
</feature>
<feature type="domain" description="RNase III 1" evidence="3">
    <location>
        <begin position="1083"/>
        <end position="1251"/>
    </location>
</feature>
<feature type="domain" description="RNase III 2" evidence="3">
    <location>
        <begin position="1292"/>
        <end position="1436"/>
    </location>
</feature>
<feature type="domain" description="DRBM 1" evidence="4">
    <location>
        <begin position="1462"/>
        <end position="1528"/>
    </location>
</feature>
<feature type="domain" description="DRBM 2" evidence="4">
    <location>
        <begin position="1621"/>
        <end position="1697"/>
    </location>
</feature>
<feature type="region of interest" description="Disordered" evidence="8">
    <location>
        <begin position="1"/>
        <end position="52"/>
    </location>
</feature>
<feature type="region of interest" description="Disordered" evidence="8">
    <location>
        <begin position="89"/>
        <end position="120"/>
    </location>
</feature>
<feature type="short sequence motif" description="DECH box">
    <location>
        <begin position="251"/>
        <end position="254"/>
    </location>
</feature>
<feature type="compositionally biased region" description="Basic and acidic residues" evidence="8">
    <location>
        <begin position="17"/>
        <end position="31"/>
    </location>
</feature>
<feature type="compositionally biased region" description="Low complexity" evidence="8">
    <location>
        <begin position="89"/>
        <end position="105"/>
    </location>
</feature>
<feature type="binding site" evidence="5">
    <location>
        <begin position="144"/>
        <end position="151"/>
    </location>
    <ligand>
        <name>ATP</name>
        <dbReference type="ChEBI" id="CHEBI:30616"/>
    </ligand>
</feature>
<feature type="binding site" evidence="1">
    <location>
        <position position="1330"/>
    </location>
    <ligand>
        <name>Mg(2+)</name>
        <dbReference type="ChEBI" id="CHEBI:18420"/>
    </ligand>
</feature>
<feature type="binding site" evidence="1">
    <location>
        <position position="1422"/>
    </location>
    <ligand>
        <name>Mg(2+)</name>
        <dbReference type="ChEBI" id="CHEBI:18420"/>
    </ligand>
</feature>
<feature type="binding site" evidence="1">
    <location>
        <position position="1425"/>
    </location>
    <ligand>
        <name>Mg(2+)</name>
        <dbReference type="ChEBI" id="CHEBI:18420"/>
    </ligand>
</feature>
<feature type="site" description="Important for activity" evidence="1">
    <location>
        <position position="1418"/>
    </location>
</feature>
<feature type="helix" evidence="23">
    <location>
        <begin position="655"/>
        <end position="664"/>
    </location>
</feature>
<feature type="strand" evidence="23">
    <location>
        <begin position="667"/>
        <end position="669"/>
    </location>
</feature>
<feature type="strand" evidence="23">
    <location>
        <begin position="678"/>
        <end position="683"/>
    </location>
</feature>
<feature type="helix" evidence="23">
    <location>
        <begin position="686"/>
        <end position="688"/>
    </location>
</feature>
<feature type="strand" evidence="23">
    <location>
        <begin position="690"/>
        <end position="695"/>
    </location>
</feature>
<feature type="strand" evidence="23">
    <location>
        <begin position="705"/>
        <end position="708"/>
    </location>
</feature>
<feature type="helix" evidence="23">
    <location>
        <begin position="713"/>
        <end position="731"/>
    </location>
</feature>
<feature type="turn" evidence="23">
    <location>
        <begin position="735"/>
        <end position="737"/>
    </location>
</feature>
<feature type="helix" evidence="23">
    <location>
        <begin position="741"/>
        <end position="744"/>
    </location>
</feature>
<feature type="turn" evidence="23">
    <location>
        <begin position="748"/>
        <end position="750"/>
    </location>
</feature>
<comment type="function">
    <text evidence="11 12 13 14 15 16 17 18 19 20 21">Ribonuclease (RNase) III involved in RNA-mediated post-transcriptional gene silencing (PTGS). Functions in the biogenesis of trans-acting small interfering RNAs (ta-siRNAs, derived from the TAS1, TAS2 or TAS3 endogenous transcripts) by cleaving small dsRNAs into 21-24 nucleotide ta-siRNAs. Functions with the dsRNA-binding protein DRB4 in ta-siRNAs processing. Acts in the RDR6/SGS3/DCL4/AGO7 ta-siRNA pathway involved in leaf developmental timing. Plays a role in transitive silencing of transgenes by processing secondary siRNAs. This pathway, which requires DCL2 and RDR6, amplifies silencing by using the target RNA as substrate to generate secondary siRNAs, providing an efficient mechanism for long-distance silencing. Required for the production of the 30-40 nucleotide bacterial-induced long siRNAs (lsiRNA). May participate with DCL3 in the production of 24 nucleotide repeat-associated siRNAs (ra-siRNAs) which derive from heterochromatin and DNA repeats such as transposons. Plays an important role in antiviral RNA silencing. Involved in the production of viral siRNAs derived from the cucumber mosaic virus (CMV), turnip crinkle virus (TCV) and tobacco rattle virus (TRV). Targeted by the viral silencing suppressor (VSR) protein 2b of the cucumber mosaic virus (CMV) that inactivates DCL4 function in RNA silencing. Does not seem to be involved in microRNAs (miRNAs) processing.</text>
</comment>
<comment type="cofactor">
    <cofactor evidence="1">
        <name>Mg(2+)</name>
        <dbReference type="ChEBI" id="CHEBI:18420"/>
    </cofactor>
    <cofactor evidence="1">
        <name>Mn(2+)</name>
        <dbReference type="ChEBI" id="CHEBI:29035"/>
    </cofactor>
</comment>
<comment type="subunit">
    <text evidence="10">Interacts with DRB4.</text>
</comment>
<comment type="subcellular location">
    <subcellularLocation>
        <location evidence="10">Nucleus</location>
    </subcellularLocation>
</comment>
<comment type="alternative products">
    <event type="alternative splicing"/>
    <isoform>
        <id>P84634-1</id>
        <name>1</name>
        <sequence type="displayed"/>
    </isoform>
    <text>A number of isoforms are produced. According to EST sequences.</text>
</comment>
<comment type="similarity">
    <text evidence="7">Belongs to the helicase family. Dicer subfamily.</text>
</comment>
<reference key="1">
    <citation type="journal article" date="2005" name="Proc. Natl. Acad. Sci. U.S.A.">
        <title>DICER-LIKE 4 functions in trans-acting small interfering RNA biogenesis and vegetative phase change in Arabidopsis thaliana.</title>
        <authorList>
            <person name="Xie Z."/>
            <person name="Allen E."/>
            <person name="Wilken A."/>
            <person name="Carrington J.C."/>
        </authorList>
    </citation>
    <scope>NUCLEOTIDE SEQUENCE [MRNA]</scope>
    <scope>FUNCTION</scope>
    <source>
        <strain>cv. Columbia</strain>
        <tissue>Shoot</tissue>
    </source>
</reference>
<reference evidence="22" key="2">
    <citation type="journal article" date="2000" name="Nature">
        <title>Sequence and analysis of chromosome 5 of the plant Arabidopsis thaliana.</title>
        <authorList>
            <person name="Tabata S."/>
            <person name="Kaneko T."/>
            <person name="Nakamura Y."/>
            <person name="Kotani H."/>
            <person name="Kato T."/>
            <person name="Asamizu E."/>
            <person name="Miyajima N."/>
            <person name="Sasamoto S."/>
            <person name="Kimura T."/>
            <person name="Hosouchi T."/>
            <person name="Kawashima K."/>
            <person name="Kohara M."/>
            <person name="Matsumoto M."/>
            <person name="Matsuno A."/>
            <person name="Muraki A."/>
            <person name="Nakayama S."/>
            <person name="Nakazaki N."/>
            <person name="Naruo K."/>
            <person name="Okumura S."/>
            <person name="Shinpo S."/>
            <person name="Takeuchi C."/>
            <person name="Wada T."/>
            <person name="Watanabe A."/>
            <person name="Yamada M."/>
            <person name="Yasuda M."/>
            <person name="Sato S."/>
            <person name="de la Bastide M."/>
            <person name="Huang E."/>
            <person name="Spiegel L."/>
            <person name="Gnoj L."/>
            <person name="O'Shaughnessy A."/>
            <person name="Preston R."/>
            <person name="Habermann K."/>
            <person name="Murray J."/>
            <person name="Johnson D."/>
            <person name="Rohlfing T."/>
            <person name="Nelson J."/>
            <person name="Stoneking T."/>
            <person name="Pepin K."/>
            <person name="Spieth J."/>
            <person name="Sekhon M."/>
            <person name="Armstrong J."/>
            <person name="Becker M."/>
            <person name="Belter E."/>
            <person name="Cordum H."/>
            <person name="Cordes M."/>
            <person name="Courtney L."/>
            <person name="Courtney W."/>
            <person name="Dante M."/>
            <person name="Du H."/>
            <person name="Edwards J."/>
            <person name="Fryman J."/>
            <person name="Haakensen B."/>
            <person name="Lamar E."/>
            <person name="Latreille P."/>
            <person name="Leonard S."/>
            <person name="Meyer R."/>
            <person name="Mulvaney E."/>
            <person name="Ozersky P."/>
            <person name="Riley A."/>
            <person name="Strowmatt C."/>
            <person name="Wagner-McPherson C."/>
            <person name="Wollam A."/>
            <person name="Yoakum M."/>
            <person name="Bell M."/>
            <person name="Dedhia N."/>
            <person name="Parnell L."/>
            <person name="Shah R."/>
            <person name="Rodriguez M."/>
            <person name="Hoon See L."/>
            <person name="Vil D."/>
            <person name="Baker J."/>
            <person name="Kirchoff K."/>
            <person name="Toth K."/>
            <person name="King L."/>
            <person name="Bahret A."/>
            <person name="Miller B."/>
            <person name="Marra M.A."/>
            <person name="Martienssen R."/>
            <person name="McCombie W.R."/>
            <person name="Wilson R.K."/>
            <person name="Murphy G."/>
            <person name="Bancroft I."/>
            <person name="Volckaert G."/>
            <person name="Wambutt R."/>
            <person name="Duesterhoeft A."/>
            <person name="Stiekema W."/>
            <person name="Pohl T."/>
            <person name="Entian K.-D."/>
            <person name="Terryn N."/>
            <person name="Hartley N."/>
            <person name="Bent E."/>
            <person name="Johnson S."/>
            <person name="Langham S.-A."/>
            <person name="McCullagh B."/>
            <person name="Robben J."/>
            <person name="Grymonprez B."/>
            <person name="Zimmermann W."/>
            <person name="Ramsperger U."/>
            <person name="Wedler H."/>
            <person name="Balke K."/>
            <person name="Wedler E."/>
            <person name="Peters S."/>
            <person name="van Staveren M."/>
            <person name="Dirkse W."/>
            <person name="Mooijman P."/>
            <person name="Klein Lankhorst R."/>
            <person name="Weitzenegger T."/>
            <person name="Bothe G."/>
            <person name="Rose M."/>
            <person name="Hauf J."/>
            <person name="Berneiser S."/>
            <person name="Hempel S."/>
            <person name="Feldpausch M."/>
            <person name="Lamberth S."/>
            <person name="Villarroel R."/>
            <person name="Gielen J."/>
            <person name="Ardiles W."/>
            <person name="Bents O."/>
            <person name="Lemcke K."/>
            <person name="Kolesov G."/>
            <person name="Mayer K.F.X."/>
            <person name="Rudd S."/>
            <person name="Schoof H."/>
            <person name="Schueller C."/>
            <person name="Zaccaria P."/>
            <person name="Mewes H.-W."/>
            <person name="Bevan M."/>
            <person name="Fransz P.F."/>
        </authorList>
    </citation>
    <scope>NUCLEOTIDE SEQUENCE [LARGE SCALE GENOMIC DNA]</scope>
    <source>
        <strain evidence="9">cv. Columbia</strain>
    </source>
</reference>
<reference key="3">
    <citation type="journal article" date="2017" name="Plant J.">
        <title>Araport11: a complete reannotation of the Arabidopsis thaliana reference genome.</title>
        <authorList>
            <person name="Cheng C.Y."/>
            <person name="Krishnakumar V."/>
            <person name="Chan A.P."/>
            <person name="Thibaud-Nissen F."/>
            <person name="Schobel S."/>
            <person name="Town C.D."/>
        </authorList>
    </citation>
    <scope>GENOME REANNOTATION</scope>
    <source>
        <strain>cv. Columbia</strain>
    </source>
</reference>
<reference evidence="22" key="4">
    <citation type="journal article" date="2005" name="Plant Mol. Biol.">
        <title>Specific interactions between Dicer-like proteins and HYL1/DRB-family dsRNA-binding proteins in Arabidopsis thaliana.</title>
        <authorList>
            <person name="Hiraguri A."/>
            <person name="Itoh R."/>
            <person name="Kondo N."/>
            <person name="Nomura Y."/>
            <person name="Aizawa D."/>
            <person name="Murai Y."/>
            <person name="Koiwa H."/>
            <person name="Seki M."/>
            <person name="Shinozaki K."/>
            <person name="Fukuhara T."/>
        </authorList>
    </citation>
    <scope>SUBCELLULAR LOCATION</scope>
    <scope>INTERACTION WITH DRB4</scope>
</reference>
<reference key="5">
    <citation type="journal article" date="2005" name="Curr. Biol.">
        <title>Partially redundant functions of Arabidopsis DICER-like enzymes and a role for DCL4 in producing trans-acting siRNAs.</title>
        <authorList>
            <person name="Gasciolli V."/>
            <person name="Mallory A.C."/>
            <person name="Bartel D.P."/>
            <person name="Vaucheret H."/>
        </authorList>
    </citation>
    <scope>FUNCTION</scope>
</reference>
<reference key="6">
    <citation type="journal article" date="2005" name="Genes Dev.">
        <title>A pathway for the biogenesis of trans-acting siRNAs in Arabidopsis.</title>
        <authorList>
            <person name="Yoshikawa M."/>
            <person name="Peragine A."/>
            <person name="Park M.Y."/>
            <person name="Poethig R.S."/>
        </authorList>
    </citation>
    <scope>FUNCTION</scope>
</reference>
<reference key="7">
    <citation type="journal article" date="2005" name="Nat. Genet.">
        <title>DICER-LIKE 4 is required for RNA interference and produces the 21-nucleotide small interfering RNA component of the plant cell-to-cell silencing signal.</title>
        <authorList>
            <person name="Dunoyer P."/>
            <person name="Himber C."/>
            <person name="Voinnet O."/>
        </authorList>
    </citation>
    <scope>FUNCTION</scope>
</reference>
<reference key="8">
    <citation type="journal article" date="2006" name="Curr. Biol.">
        <title>DRB4-dependent TAS3 trans-acting siRNAs control leaf morphology through AGO7.</title>
        <authorList>
            <person name="Adenot X."/>
            <person name="Elmayan T."/>
            <person name="Lauressergues D."/>
            <person name="Boutet S."/>
            <person name="Bouche N."/>
            <person name="Gasciolli V."/>
            <person name="Vaucheret H."/>
        </authorList>
    </citation>
    <scope>FUNCTION</scope>
</reference>
<reference key="9">
    <citation type="journal article" date="2006" name="EMBO J.">
        <title>An antagonistic function for Arabidopsis DCL2 in development and a new function for DCL4 in generating viral siRNAs.</title>
        <authorList>
            <person name="Bouche N."/>
            <person name="Lauressergues D."/>
            <person name="Gasciolli V."/>
            <person name="Vaucheret H."/>
        </authorList>
    </citation>
    <scope>FUNCTION</scope>
</reference>
<reference key="10">
    <citation type="journal article" date="2007" name="Genes Dev.">
        <title>A novel class of bacteria-induced small RNAs in Arabidopsis.</title>
        <authorList>
            <person name="Katiyar-Agarwal S."/>
            <person name="Gao S."/>
            <person name="Vivian-Smith A."/>
            <person name="Jin H."/>
        </authorList>
    </citation>
    <scope>FUNCTION</scope>
</reference>
<reference key="11">
    <citation type="journal article" date="2007" name="Plant Cell">
        <title>Suppression of antiviral silencing by cucumber mosaic virus 2b protein in Arabidopsis is associated with drastically reduced accumulation of three classes of viral small interfering RNAs.</title>
        <authorList>
            <person name="Diaz-Pendon J.A."/>
            <person name="Li F."/>
            <person name="Li W.X."/>
            <person name="Ding S.W."/>
        </authorList>
    </citation>
    <scope>FUNCTION</scope>
</reference>
<reference key="12">
    <citation type="journal article" date="2007" name="RNA">
        <title>Transitivity in Arabidopsis can be primed, requires the redundant action of the antiviral Dicer-like 4 and Dicer-like 2, and is compromised by viral-encoded suppressor proteins.</title>
        <authorList>
            <person name="Moissiard G."/>
            <person name="Parizotto E.A."/>
            <person name="Himber C."/>
            <person name="Voinnet O."/>
        </authorList>
    </citation>
    <scope>FUNCTION</scope>
</reference>
<reference key="13">
    <citation type="journal article" date="2008" name="J. Virol.">
        <title>Structural and genetic requirements for the biogenesis of tobacco rattle virus-derived small interfering RNAs.</title>
        <authorList>
            <person name="Donaire L."/>
            <person name="Barajas D."/>
            <person name="Martinez-Garcia B."/>
            <person name="Martinez-Priego L."/>
            <person name="Pagan I."/>
            <person name="Llave C."/>
        </authorList>
    </citation>
    <scope>FUNCTION</scope>
</reference>
<reference key="14">
    <citation type="journal article" date="2008" name="Proc. Natl. Acad. Sci. U.S.A.">
        <title>Arabidopsis DRB4, AGO1, AGO7, and RDR6 participate in a DCL4-initiated antiviral RNA silencing pathway negatively regulated by DCL1.</title>
        <authorList>
            <person name="Qu F."/>
            <person name="Ye X."/>
            <person name="Morris T.J."/>
        </authorList>
    </citation>
    <scope>FUNCTION</scope>
</reference>
<reference key="15">
    <citation type="journal article" date="2013" name="PLoS ONE">
        <title>Genome-wide comparative in silico analysis of the RNA helicase gene family in Zea mays and Glycine max: a comparison with Arabidopsis and Oryza sativa.</title>
        <authorList>
            <person name="Xu R."/>
            <person name="Zhang S."/>
            <person name="Huang J."/>
            <person name="Zheng C."/>
        </authorList>
    </citation>
    <scope>GENE FAMILY</scope>
</reference>
<reference key="16">
    <citation type="journal article" date="2010" name="RNA">
        <title>Structure of the Arabidopsis thaliana DCL4 DUF283 domain reveals a noncanonical double-stranded RNA-binding fold for protein-protein interaction.</title>
        <authorList>
            <person name="Qin H."/>
            <person name="Chen F."/>
            <person name="Huan X."/>
            <person name="Machida S."/>
            <person name="Song J."/>
            <person name="Yuan Y.A."/>
        </authorList>
    </citation>
    <scope>STRUCTURE BY NMR OF 651-752</scope>
</reference>
<gene>
    <name type="primary">DCL4</name>
    <name type="ordered locus">At5g20320</name>
    <name type="ORF">F5O24.210</name>
</gene>
<accession>P84634</accession>
<accession>Q3SA53</accession>
<sequence>MRDEVDLSLTIPSKLLGKRDREQKNCEEEKNKNKKAKKQQKDPILLHTSAATHKFLPPPLTMPYSEIGDDLRSLDFDHADVSSDLHLTSSSSVSSFSSSSSSLFSAAGTDDPSPKMEKDPRKIARRYQVELCKKATEENVIVYLGTGCGKTHIAVMLIYELGHLVLSPKKSVCIFLAPTVALVEQQAKVIADSVNFKVAIHCGGKRIVKSHSEWEREIAANEVLVMTPQILLHNLQHCFIKMECISLLIFDECHHAQQQSNHPYAEIMKVFYKSESLQRPRIFGMTASPVVGKGSFQSENLSKSINSLENLLNAKVYSVESNVQLDGFVSSPLVKVYYYRSALSDASQSTIRYENMLEDIKQRCLASLKLLIDTHQTQTLLSMKRLLKRSHDNLIYTLLNLGLWGAIQAAKIQLNSDHNVQDEPVGKNPKSKICDTYLSMAAEALSSGVAKDENASDLLSLAALKEPLFSRKLVQLIKILSVFRLEPHMKCIIFVNRIVTARTLSCILNNLELLRSWKSDFLVGLSSGLKSMSRRSMETILKRFQSKELNLLVATKVGEEGLDIQTCCLVIRYDLPETVTSFIQSRGRARMPQSEYAFLVDSGNEKEMDLIENFKVNEDRMNLEITYRSSEETCPRLDEELYKVHETGACISGGSSISLLYKYCSRLPHDEFFQPKPEFQFKPVDEFGGTICRITLPANAPISEIESSLLPSTEAAKKDACLKAVHELHNLGVLNDFLLPDSKDEIEDELSDDEFDFDNIKGEGCSRGDLYEMRVPVLFKQKWDPSTSCVNLHSYYIMFVPHPADRIYKKFGFFMKSPLPVEAETMDIDLHLAHQRSVSVKIFPSGVTEFDNDEIRLAELFQEIALKVLFERGELIPDFVPLELQDSSRTSKSTFYLLLPLCLHDGESVISVDWVTIRNCLSSPIFKTPSVLVEDIFPPSGSHLKLANGCWNIDDVKNSLVFTTYSKQFYFVADICHGRNGFSPVKESSTKSHVESIYKLYGVELKHPAQPLLRVKPLCHVRNLLHNRMQTNLEPQELDEYFIEIPPELSHLKIKGLSKDIGSSLSLLPSIMHRMENLLVAIELKHVLSASIPEIAEVSGHRVLEALTTEKCHERLSLERLEVLGDAFLKFAVSRHLFLHHDSLDEGELTRRRSNVVNNSNLCRLAIKKNLQVYIRDQALDPTQFFAFGHPCRVTCDEVASKEVHSLNRDLGILESNTGEIRCSKGHHWLYKKTIADVVEALVGAFLVDSGFKGAVKFLKWIGVNVDFESLQVQDACIASRRYLPLTTRNNLETLENQLDYKFLHKGLLVQAFIHPSYNRHGGGCYQRLEFLGDAVLDYLMTSYFFTVFPKLKPGQLTDLRSLSVNNEALANVAVSFSLKRFLFCESIYLHEVIEDYTNFLASSPLASGQSEGPRCPKVLGDLVESCLGALFLDCGFNLNHVWTMMLSFLDPVKNLSNLQISPIKELIELCQSYKWDREISATKKDGAFTVELKVTKNGCCLTVSATGRNKREGTKKAAQLMITNLKAHENITTSHPLEDVLKNGIRNEAKLIGYNEDPIDVVDLVGLDVENLNILETFGGNSERSSSYVIRRGLPQAPSKTEDRLPQKAIIKAGGPSSKTAKSLLHETCVANCWKPPHFECCEEEGPGHLKSFVYKVILEVEDAPNMTLECYGEARATKKGAAEHAAQAAIWCLKHSGFLC</sequence>
<dbReference type="EC" id="3.1.26.-"/>
<dbReference type="EMBL" id="DQ118423">
    <property type="protein sequence ID" value="AAZ80387.1"/>
    <property type="molecule type" value="mRNA"/>
</dbReference>
<dbReference type="EMBL" id="AF296825">
    <property type="status" value="NOT_ANNOTATED_CDS"/>
    <property type="molecule type" value="Genomic_DNA"/>
</dbReference>
<dbReference type="EMBL" id="CP002688">
    <property type="protein sequence ID" value="AED92830.1"/>
    <property type="molecule type" value="Genomic_DNA"/>
</dbReference>
<dbReference type="RefSeq" id="NP_197532.3">
    <molecule id="P84634-1"/>
    <property type="nucleotide sequence ID" value="NM_122039.5"/>
</dbReference>
<dbReference type="PDB" id="2KOU">
    <property type="method" value="NMR"/>
    <property type="chains" value="A=651-752"/>
</dbReference>
<dbReference type="PDBsum" id="2KOU"/>
<dbReference type="BMRB" id="P84634"/>
<dbReference type="SMR" id="P84634"/>
<dbReference type="BioGRID" id="17430">
    <property type="interactions" value="4"/>
</dbReference>
<dbReference type="FunCoup" id="P84634">
    <property type="interactions" value="3072"/>
</dbReference>
<dbReference type="IntAct" id="P84634">
    <property type="interactions" value="2"/>
</dbReference>
<dbReference type="MINT" id="P84634"/>
<dbReference type="STRING" id="3702.P84634"/>
<dbReference type="iPTMnet" id="P84634"/>
<dbReference type="PaxDb" id="3702-AT5G20320.1"/>
<dbReference type="ProteomicsDB" id="224171">
    <molecule id="P84634-1"/>
</dbReference>
<dbReference type="EnsemblPlants" id="AT5G20320.1">
    <molecule id="P84634-1"/>
    <property type="protein sequence ID" value="AT5G20320.1"/>
    <property type="gene ID" value="AT5G20320"/>
</dbReference>
<dbReference type="GeneID" id="832154"/>
<dbReference type="Gramene" id="AT5G20320.1">
    <molecule id="P84634-1"/>
    <property type="protein sequence ID" value="AT5G20320.1"/>
    <property type="gene ID" value="AT5G20320"/>
</dbReference>
<dbReference type="KEGG" id="ath:AT5G20320"/>
<dbReference type="Araport" id="AT5G20320"/>
<dbReference type="TAIR" id="AT5G20320">
    <property type="gene designation" value="DCL4"/>
</dbReference>
<dbReference type="eggNOG" id="KOG0701">
    <property type="taxonomic scope" value="Eukaryota"/>
</dbReference>
<dbReference type="HOGENOM" id="CLU_000907_4_4_1"/>
<dbReference type="InParanoid" id="P84634"/>
<dbReference type="OrthoDB" id="2392202at2759"/>
<dbReference type="PhylomeDB" id="P84634"/>
<dbReference type="EvolutionaryTrace" id="P84634"/>
<dbReference type="PRO" id="PR:P84634"/>
<dbReference type="Proteomes" id="UP000006548">
    <property type="component" value="Chromosome 5"/>
</dbReference>
<dbReference type="ExpressionAtlas" id="P84634">
    <property type="expression patterns" value="baseline and differential"/>
</dbReference>
<dbReference type="GO" id="GO:0036464">
    <property type="term" value="C:cytoplasmic ribonucleoprotein granule"/>
    <property type="evidence" value="ECO:0000314"/>
    <property type="project" value="FlyBase"/>
</dbReference>
<dbReference type="GO" id="GO:0005829">
    <property type="term" value="C:cytosol"/>
    <property type="evidence" value="ECO:0007005"/>
    <property type="project" value="TAIR"/>
</dbReference>
<dbReference type="GO" id="GO:0005634">
    <property type="term" value="C:nucleus"/>
    <property type="evidence" value="ECO:0000314"/>
    <property type="project" value="TAIR"/>
</dbReference>
<dbReference type="GO" id="GO:0005524">
    <property type="term" value="F:ATP binding"/>
    <property type="evidence" value="ECO:0007669"/>
    <property type="project" value="UniProtKB-KW"/>
</dbReference>
<dbReference type="GO" id="GO:0004386">
    <property type="term" value="F:helicase activity"/>
    <property type="evidence" value="ECO:0007669"/>
    <property type="project" value="UniProtKB-KW"/>
</dbReference>
<dbReference type="GO" id="GO:0046872">
    <property type="term" value="F:metal ion binding"/>
    <property type="evidence" value="ECO:0007669"/>
    <property type="project" value="UniProtKB-KW"/>
</dbReference>
<dbReference type="GO" id="GO:0004525">
    <property type="term" value="F:ribonuclease III activity"/>
    <property type="evidence" value="ECO:0007669"/>
    <property type="project" value="InterPro"/>
</dbReference>
<dbReference type="GO" id="GO:0003723">
    <property type="term" value="F:RNA binding"/>
    <property type="evidence" value="ECO:0007669"/>
    <property type="project" value="UniProtKB-KW"/>
</dbReference>
<dbReference type="GO" id="GO:0051607">
    <property type="term" value="P:defense response to virus"/>
    <property type="evidence" value="ECO:0000315"/>
    <property type="project" value="TAIR"/>
</dbReference>
<dbReference type="GO" id="GO:0006353">
    <property type="term" value="P:DNA-templated transcription termination"/>
    <property type="evidence" value="ECO:0000315"/>
    <property type="project" value="TAIR"/>
</dbReference>
<dbReference type="GO" id="GO:0010599">
    <property type="term" value="P:lsiRNA processing"/>
    <property type="evidence" value="ECO:0000315"/>
    <property type="project" value="TAIR"/>
</dbReference>
<dbReference type="GO" id="GO:0010492">
    <property type="term" value="P:maintenance of shoot apical meristem identity"/>
    <property type="evidence" value="ECO:0007669"/>
    <property type="project" value="EnsemblPlants"/>
</dbReference>
<dbReference type="GO" id="GO:0009944">
    <property type="term" value="P:polarity specification of adaxial/abaxial axis"/>
    <property type="evidence" value="ECO:0007669"/>
    <property type="project" value="EnsemblPlants"/>
</dbReference>
<dbReference type="GO" id="GO:0048608">
    <property type="term" value="P:reproductive structure development"/>
    <property type="evidence" value="ECO:0007669"/>
    <property type="project" value="EnsemblPlants"/>
</dbReference>
<dbReference type="GO" id="GO:0009616">
    <property type="term" value="P:RNAi-mediated antiviral immune response"/>
    <property type="evidence" value="ECO:0000316"/>
    <property type="project" value="TAIR"/>
</dbReference>
<dbReference type="GO" id="GO:0051214">
    <property type="term" value="P:RNAi-mediated antiviral immunity against RNA virus"/>
    <property type="evidence" value="ECO:0000316"/>
    <property type="project" value="TAIR"/>
</dbReference>
<dbReference type="GO" id="GO:0010267">
    <property type="term" value="P:ta-siRNA processing"/>
    <property type="evidence" value="ECO:0000315"/>
    <property type="project" value="TAIR"/>
</dbReference>
<dbReference type="GO" id="GO:0010050">
    <property type="term" value="P:vegetative phase change"/>
    <property type="evidence" value="ECO:0000315"/>
    <property type="project" value="TAIR"/>
</dbReference>
<dbReference type="CDD" id="cd18034">
    <property type="entry name" value="DEXHc_dicer"/>
    <property type="match status" value="1"/>
</dbReference>
<dbReference type="CDD" id="cd19869">
    <property type="entry name" value="DSRM_DCL_plant"/>
    <property type="match status" value="1"/>
</dbReference>
<dbReference type="CDD" id="cd00593">
    <property type="entry name" value="RIBOc"/>
    <property type="match status" value="2"/>
</dbReference>
<dbReference type="CDD" id="cd18802">
    <property type="entry name" value="SF2_C_dicer"/>
    <property type="match status" value="1"/>
</dbReference>
<dbReference type="DisProt" id="DP01543"/>
<dbReference type="FunFam" id="3.30.160.20:FF:000113">
    <property type="entry name" value="Dicer-like 4"/>
    <property type="match status" value="1"/>
</dbReference>
<dbReference type="FunFam" id="1.10.1520.10:FF:000031">
    <property type="entry name" value="Dicer-like protein 4"/>
    <property type="match status" value="1"/>
</dbReference>
<dbReference type="FunFam" id="1.10.1520.10:FF:000004">
    <property type="entry name" value="Endoribonuclease dicer-like 1"/>
    <property type="match status" value="1"/>
</dbReference>
<dbReference type="FunFam" id="3.30.160.380:FF:000001">
    <property type="entry name" value="Endoribonuclease dicer-like 1"/>
    <property type="match status" value="1"/>
</dbReference>
<dbReference type="FunFam" id="3.40.50.300:FF:000420">
    <property type="entry name" value="Endoribonuclease dicer-like 1"/>
    <property type="match status" value="1"/>
</dbReference>
<dbReference type="FunFam" id="3.40.50.300:FF:000705">
    <property type="entry name" value="Endoribonuclease dicer-like protein"/>
    <property type="match status" value="1"/>
</dbReference>
<dbReference type="Gene3D" id="3.30.160.20">
    <property type="match status" value="2"/>
</dbReference>
<dbReference type="Gene3D" id="3.30.160.380">
    <property type="entry name" value="Dicer dimerisation domain"/>
    <property type="match status" value="1"/>
</dbReference>
<dbReference type="Gene3D" id="3.40.50.300">
    <property type="entry name" value="P-loop containing nucleotide triphosphate hydrolases"/>
    <property type="match status" value="2"/>
</dbReference>
<dbReference type="Gene3D" id="2.170.260.10">
    <property type="entry name" value="paz domain"/>
    <property type="match status" value="1"/>
</dbReference>
<dbReference type="Gene3D" id="1.10.1520.10">
    <property type="entry name" value="Ribonuclease III domain"/>
    <property type="match status" value="2"/>
</dbReference>
<dbReference type="InterPro" id="IPR011545">
    <property type="entry name" value="DEAD/DEAH_box_helicase_dom"/>
</dbReference>
<dbReference type="InterPro" id="IPR038248">
    <property type="entry name" value="Dicer_dimer_sf"/>
</dbReference>
<dbReference type="InterPro" id="IPR005034">
    <property type="entry name" value="Dicer_dimerisation_dom"/>
</dbReference>
<dbReference type="InterPro" id="IPR014720">
    <property type="entry name" value="dsRBD_dom"/>
</dbReference>
<dbReference type="InterPro" id="IPR014001">
    <property type="entry name" value="Helicase_ATP-bd"/>
</dbReference>
<dbReference type="InterPro" id="IPR001650">
    <property type="entry name" value="Helicase_C-like"/>
</dbReference>
<dbReference type="InterPro" id="IPR027417">
    <property type="entry name" value="P-loop_NTPase"/>
</dbReference>
<dbReference type="InterPro" id="IPR003100">
    <property type="entry name" value="PAZ_dom"/>
</dbReference>
<dbReference type="InterPro" id="IPR000999">
    <property type="entry name" value="RNase_III_dom"/>
</dbReference>
<dbReference type="InterPro" id="IPR036389">
    <property type="entry name" value="RNase_III_sf"/>
</dbReference>
<dbReference type="PANTHER" id="PTHR14950:SF15">
    <property type="entry name" value="DICER-LIKE PROTEIN 4"/>
    <property type="match status" value="1"/>
</dbReference>
<dbReference type="PANTHER" id="PTHR14950">
    <property type="entry name" value="DICER-RELATED"/>
    <property type="match status" value="1"/>
</dbReference>
<dbReference type="Pfam" id="PF00270">
    <property type="entry name" value="DEAD"/>
    <property type="match status" value="1"/>
</dbReference>
<dbReference type="Pfam" id="PF03368">
    <property type="entry name" value="Dicer_dimer"/>
    <property type="match status" value="1"/>
</dbReference>
<dbReference type="Pfam" id="PF14709">
    <property type="entry name" value="DND1_DSRM"/>
    <property type="match status" value="1"/>
</dbReference>
<dbReference type="Pfam" id="PF00271">
    <property type="entry name" value="Helicase_C"/>
    <property type="match status" value="1"/>
</dbReference>
<dbReference type="Pfam" id="PF00636">
    <property type="entry name" value="Ribonuclease_3"/>
    <property type="match status" value="2"/>
</dbReference>
<dbReference type="SMART" id="SM00487">
    <property type="entry name" value="DEXDc"/>
    <property type="match status" value="1"/>
</dbReference>
<dbReference type="SMART" id="SM00358">
    <property type="entry name" value="DSRM"/>
    <property type="match status" value="2"/>
</dbReference>
<dbReference type="SMART" id="SM00490">
    <property type="entry name" value="HELICc"/>
    <property type="match status" value="1"/>
</dbReference>
<dbReference type="SMART" id="SM00949">
    <property type="entry name" value="PAZ"/>
    <property type="match status" value="1"/>
</dbReference>
<dbReference type="SMART" id="SM00535">
    <property type="entry name" value="RIBOc"/>
    <property type="match status" value="2"/>
</dbReference>
<dbReference type="SUPFAM" id="SSF54768">
    <property type="entry name" value="dsRNA-binding domain-like"/>
    <property type="match status" value="2"/>
</dbReference>
<dbReference type="SUPFAM" id="SSF52540">
    <property type="entry name" value="P-loop containing nucleoside triphosphate hydrolases"/>
    <property type="match status" value="1"/>
</dbReference>
<dbReference type="SUPFAM" id="SSF69065">
    <property type="entry name" value="RNase III domain-like"/>
    <property type="match status" value="2"/>
</dbReference>
<dbReference type="PROSITE" id="PS51327">
    <property type="entry name" value="DICER_DSRBF"/>
    <property type="match status" value="1"/>
</dbReference>
<dbReference type="PROSITE" id="PS50137">
    <property type="entry name" value="DS_RBD"/>
    <property type="match status" value="1"/>
</dbReference>
<dbReference type="PROSITE" id="PS51192">
    <property type="entry name" value="HELICASE_ATP_BIND_1"/>
    <property type="match status" value="1"/>
</dbReference>
<dbReference type="PROSITE" id="PS51194">
    <property type="entry name" value="HELICASE_CTER"/>
    <property type="match status" value="1"/>
</dbReference>
<dbReference type="PROSITE" id="PS50821">
    <property type="entry name" value="PAZ"/>
    <property type="match status" value="1"/>
</dbReference>
<dbReference type="PROSITE" id="PS00517">
    <property type="entry name" value="RNASE_3_1"/>
    <property type="match status" value="1"/>
</dbReference>
<dbReference type="PROSITE" id="PS50142">
    <property type="entry name" value="RNASE_3_2"/>
    <property type="match status" value="2"/>
</dbReference>
<organism>
    <name type="scientific">Arabidopsis thaliana</name>
    <name type="common">Mouse-ear cress</name>
    <dbReference type="NCBI Taxonomy" id="3702"/>
    <lineage>
        <taxon>Eukaryota</taxon>
        <taxon>Viridiplantae</taxon>
        <taxon>Streptophyta</taxon>
        <taxon>Embryophyta</taxon>
        <taxon>Tracheophyta</taxon>
        <taxon>Spermatophyta</taxon>
        <taxon>Magnoliopsida</taxon>
        <taxon>eudicotyledons</taxon>
        <taxon>Gunneridae</taxon>
        <taxon>Pentapetalae</taxon>
        <taxon>rosids</taxon>
        <taxon>malvids</taxon>
        <taxon>Brassicales</taxon>
        <taxon>Brassicaceae</taxon>
        <taxon>Camelineae</taxon>
        <taxon>Arabidopsis</taxon>
    </lineage>
</organism>
<name>DCL4_ARATH</name>